<name>RAP94_VACCW</name>
<feature type="chain" id="PRO_0000099121" description="RNA polymerase-associated transcription-specificity factor RAP94">
    <location>
        <begin position="1"/>
        <end position="795"/>
    </location>
</feature>
<feature type="region of interest" description="Interaction with NPH-I; required for transcription termination" evidence="2">
    <location>
        <begin position="1"/>
        <end position="196"/>
    </location>
</feature>
<feature type="region of interest" description="Interaction with J3" evidence="1">
    <location>
        <begin position="235"/>
        <end position="256"/>
    </location>
</feature>
<feature type="sequence conflict" description="In Ref. 1; AAB59840." evidence="5" ref="1">
    <original>YI</original>
    <variation>CV</variation>
    <location>
        <begin position="623"/>
        <end position="624"/>
    </location>
</feature>
<gene>
    <name type="primary">OPG109</name>
    <name type="synonym">RAP94</name>
    <name type="ordered locus">VACWR102</name>
    <name type="ORF">H4L</name>
</gene>
<accession>P68438</accession>
<accession>P07241</accession>
<accession>P08584</accession>
<accession>P21094</accession>
<accession>Q80HW2</accession>
<organismHost>
    <name type="scientific">Bos taurus</name>
    <name type="common">Bovine</name>
    <dbReference type="NCBI Taxonomy" id="9913"/>
</organismHost>
<dbReference type="EMBL" id="M13209">
    <property type="protein sequence ID" value="AAB59840.1"/>
    <property type="status" value="ALT_FRAME"/>
    <property type="molecule type" value="Genomic_DNA"/>
</dbReference>
<dbReference type="EMBL" id="AY243312">
    <property type="protein sequence ID" value="AAO89381.1"/>
    <property type="molecule type" value="Genomic_DNA"/>
</dbReference>
<dbReference type="PIR" id="D42514">
    <property type="entry name" value="QQVZH4"/>
</dbReference>
<dbReference type="PIR" id="E24481">
    <property type="entry name" value="QQVZH5"/>
</dbReference>
<dbReference type="RefSeq" id="YP_232984.1">
    <property type="nucleotide sequence ID" value="NC_006998.1"/>
</dbReference>
<dbReference type="PDB" id="8C8H">
    <property type="method" value="EM"/>
    <property type="resolution" value="3.84 A"/>
    <property type="chains" value="I=1-795"/>
</dbReference>
<dbReference type="PDBsum" id="8C8H"/>
<dbReference type="EMDB" id="EMD-16476"/>
<dbReference type="SMR" id="P68438"/>
<dbReference type="DNASU" id="3707558"/>
<dbReference type="GeneID" id="3707558"/>
<dbReference type="KEGG" id="vg:3707558"/>
<dbReference type="Proteomes" id="UP000000344">
    <property type="component" value="Genome"/>
</dbReference>
<dbReference type="GO" id="GO:0044423">
    <property type="term" value="C:virion component"/>
    <property type="evidence" value="ECO:0000314"/>
    <property type="project" value="UniProtKB"/>
</dbReference>
<dbReference type="GO" id="GO:0003700">
    <property type="term" value="F:DNA-binding transcription factor activity"/>
    <property type="evidence" value="ECO:0007669"/>
    <property type="project" value="InterPro"/>
</dbReference>
<dbReference type="GO" id="GO:0006353">
    <property type="term" value="P:DNA-templated transcription termination"/>
    <property type="evidence" value="ECO:0007669"/>
    <property type="project" value="UniProtKB-KW"/>
</dbReference>
<dbReference type="GO" id="GO:0039695">
    <property type="term" value="P:DNA-templated viral transcription"/>
    <property type="evidence" value="ECO:0000314"/>
    <property type="project" value="UniProtKB"/>
</dbReference>
<dbReference type="InterPro" id="IPR004974">
    <property type="entry name" value="Pox_Rap94"/>
</dbReference>
<dbReference type="Pfam" id="PF03294">
    <property type="entry name" value="Pox_Rap94"/>
    <property type="match status" value="1"/>
</dbReference>
<keyword id="KW-0002">3D-structure</keyword>
<keyword id="KW-0903">Direct protein sequencing</keyword>
<keyword id="KW-0426">Late protein</keyword>
<keyword id="KW-1185">Reference proteome</keyword>
<keyword id="KW-0804">Transcription</keyword>
<keyword id="KW-0805">Transcription regulation</keyword>
<keyword id="KW-0806">Transcription termination</keyword>
<keyword id="KW-0946">Virion</keyword>
<proteinExistence type="evidence at protein level"/>
<comment type="function">
    <text evidence="2 3 4">DNA-directed RNA polymerase-associated factor required for the transcription of viral early genes as well as for transcription termination. Within minutes after virus entry, recruits the core RNA polymerase, the early transcription factor (ETF) and other enzymes needed for transcription initiation, elongation, and termination thereby allowing synthesis of early mRNAs which are extruded through pores in the core particle. Recruits the multifunctional OPG102 protein, with poly(A) polymerase-stimulatory, cap nucleoside-2'-O-methyltransferase, and transcription elongation activities. Interacts with nucleoside triphosphatase I/OPG123, a DNA-dependent ATPase required for the termination of early transcripts. Acts as a transcription termination factor by binding, together with the capping enzyme/VTF, to the termination motif 5'-UUUUUNU-3' in the nascent mRNA. Involved as well in the packaging of RNA polymerase and other components needed for early transcription in assembling virus particles.</text>
</comment>
<comment type="subunit">
    <text evidence="1 2 4">Part of the early transcription complex composed of ETF, RAP94/OPG109, and the DNA-directed RNA polymerase. Interacts (via N-terminus) with nucleoside triphosphatase I/OPG123. Interacts with OPG102. Interacts with ETF heterodimer.</text>
</comment>
<comment type="subcellular location">
    <subcellularLocation>
        <location evidence="5">Virion</location>
    </subcellularLocation>
    <text>All the enzymes and other proteins required to synthesize early mRNAs are packaged within the virion core along with the DNA genome.</text>
</comment>
<comment type="induction">
    <text evidence="4">Expressed in the late phase of the viral replicative cycle.</text>
</comment>
<comment type="domain">
    <text>Interacts with ETF via its N-terminus and with DNA-directed RNA polymerase via its C-terminus.</text>
</comment>
<comment type="similarity">
    <text evidence="5">Belongs to the poxviridae protein RAP94 family.</text>
</comment>
<comment type="sequence caution" evidence="5">
    <conflict type="frameshift">
        <sequence resource="EMBL-CDS" id="AAB59840"/>
    </conflict>
</comment>
<reference key="1">
    <citation type="journal article" date="1986" name="J. Virol.">
        <title>Conserved TAAATG sequence at the transcriptional and translational initiation sites of vaccinia virus late genes deduced by structural and functional analysis of the HindIII H genome fragment.</title>
        <authorList>
            <person name="Rosel J.L."/>
            <person name="Earl P.L."/>
            <person name="Weir J.P."/>
            <person name="Moss B."/>
        </authorList>
    </citation>
    <scope>NUCLEOTIDE SEQUENCE [GENOMIC DNA]</scope>
</reference>
<reference key="2">
    <citation type="submission" date="2003-02" db="EMBL/GenBank/DDBJ databases">
        <title>Sequencing of the coding region of Vaccinia-WR to an average 9-fold redundancy and an error rate of 0.16/10kb.</title>
        <authorList>
            <person name="Esposito J.J."/>
            <person name="Frace A.M."/>
            <person name="Sammons S.A."/>
            <person name="Olsen-Rasmussen M."/>
            <person name="Osborne J."/>
            <person name="Wohlhueter R."/>
        </authorList>
    </citation>
    <scope>NUCLEOTIDE SEQUENCE [LARGE SCALE GENOMIC DNA]</scope>
</reference>
<reference key="3">
    <citation type="journal article" date="1992" name="Proc. Natl. Acad. Sci. U.S.A.">
        <title>RNA polymerase-associated transcription specificity factor encoded by vaccinia virus.</title>
        <authorList>
            <person name="Ahn B.-Y."/>
            <person name="Moss B."/>
        </authorList>
    </citation>
    <scope>CHARACTERIZATION</scope>
    <scope>PROTEIN SEQUENCE OF 17-27 AND 544-553</scope>
</reference>
<reference key="4">
    <citation type="journal article" date="2001" name="J. Biol. Chem.">
        <title>The viral RNA polymerase H4L subunit is required for Vaccinia virus early gene transcription termination.</title>
        <authorList>
            <person name="Mohamed M.R."/>
            <person name="Niles E.G."/>
        </authorList>
    </citation>
    <scope>FUNCTION</scope>
    <scope>INTERACTION WITH NPH-I</scope>
</reference>
<reference key="5">
    <citation type="journal article" date="2001" name="Virology">
        <title>Interaction between the J3R subunit of vaccinia virus poly(A) polymerase and the H4L subunit of the viral RNA polymerase.</title>
        <authorList>
            <person name="Mohamed M.R."/>
            <person name="Latner D.R."/>
            <person name="Condit R.C."/>
            <person name="Niles E.G."/>
        </authorList>
    </citation>
    <scope>INTERACTION WITH J3</scope>
</reference>
<reference key="6">
    <citation type="journal article" date="2003" name="J. Gen. Virol.">
        <title>Vaccinia virus transcription.</title>
        <authorList>
            <person name="Broyles S.S."/>
        </authorList>
    </citation>
    <scope>REVIEW</scope>
</reference>
<reference key="7">
    <citation type="journal article" date="2008" name="Virology">
        <title>Vaccinia virus early gene transcription termination factors VTF and Rap94 interact with the U9 termination motif in the nascent RNA in a transcription ternary complex.</title>
        <authorList>
            <person name="Christen L.A."/>
            <person name="Piacente S."/>
            <person name="Mohamed M.R."/>
            <person name="Niles E.G."/>
        </authorList>
    </citation>
    <scope>FUNCTION</scope>
    <scope>RNA-BINDING</scope>
</reference>
<reference key="8">
    <citation type="journal article" date="2009" name="J. Virol.">
        <title>Interaction of the vaccinia virus RNA polymerase-associated 94-kilodalton protein with the early transcription factor.</title>
        <authorList>
            <person name="Yang Z."/>
            <person name="Moss B."/>
        </authorList>
    </citation>
    <scope>FUNCTION</scope>
    <scope>INDUCTION</scope>
    <scope>IDENTIFICATION IN A COMPLEX WITH THE EARLY TRANSCRIPTION FACTOR HETERODIMER AND THE RNA POLYMERASE</scope>
</reference>
<protein>
    <recommendedName>
        <fullName>RNA polymerase-associated transcription-specificity factor RAP94</fullName>
    </recommendedName>
    <alternativeName>
        <fullName>Protein H4</fullName>
    </alternativeName>
    <alternativeName>
        <fullName>RPO-associated protein of 94 kDa</fullName>
    </alternativeName>
</protein>
<evidence type="ECO:0000269" key="1">
    <source>
    </source>
</evidence>
<evidence type="ECO:0000269" key="2">
    <source>
    </source>
</evidence>
<evidence type="ECO:0000269" key="3">
    <source>
    </source>
</evidence>
<evidence type="ECO:0000269" key="4">
    <source>
    </source>
</evidence>
<evidence type="ECO:0000305" key="5"/>
<sequence length="795" mass="93633">MDSKETILIEIIPKIKAYLLDANISPKSYDDFISRNKNIFVINLYNVSTITEEDIRLLYTTIEQNIDADDQTLVAIFSYIGYKFEQAVKEEISTSLSFNDKNTTDEMTYNLYDLFFNTLDMYLRQKKISILVNDDVRGDVIVSYKNSDLVSSFNAELEPEIKKIPFNMKNLLPYLEKNLDQLRFSKKYLDFAYLCRHIGIPISKKKYNVRYVFLYKIDGLSIPIIIKDFLDVKYVYLENTGKIYKNSFSEDHNNSLSDWGKVIIPLLKDRHLYSYIFLSSYHLHSYYTDLIARDEPVFVKRKKLDIIEIDEPEAWKRDVRVEFAPCEHQIRLKEAMKVDANYFTKINNFANEFIYYEDGVAYCRVCGINIPIFNLDAADVIKNTVIVSTFNKTIFLSEPYSYFVHSQRFIFNIIMSFDNIMKSQTWVMKYNINRLILNFLIDINSRRQEYEKKFSSEIKRGLFFLRLSANLFESQVSSTELFYVSKMLNLNYIVALVIILNSSADFIVSYMTSKNKTVEESTLKYAISVVIYDFLVKTRICEKGSLDTIVLFTDVYTSIMPEELDLHFQRITLELRKLVSIQRSALEPNYDVESRGEELPLSALKFFDTSTIIVKTMAPVHTYIEQKIVAPTPSVEPTDASLKNFKELTCDEDIKILIRVHDTNATKLVIFPSHLKIEIERKKLIIPLKSLYITNTLKYYYSNSYLYVFRFGDPMPFEEELIDHEHVQYKINCYNILRYHLLPDSDVFVYFSNSLNREALEYAFYIFLSKYVNVKQWIDENITRIKELYMINFNN</sequence>
<organism>
    <name type="scientific">Vaccinia virus (strain Western Reserve)</name>
    <name type="common">VACV</name>
    <name type="synonym">Vaccinia virus (strain WR)</name>
    <dbReference type="NCBI Taxonomy" id="10254"/>
    <lineage>
        <taxon>Viruses</taxon>
        <taxon>Varidnaviria</taxon>
        <taxon>Bamfordvirae</taxon>
        <taxon>Nucleocytoviricota</taxon>
        <taxon>Pokkesviricetes</taxon>
        <taxon>Chitovirales</taxon>
        <taxon>Poxviridae</taxon>
        <taxon>Chordopoxvirinae</taxon>
        <taxon>Orthopoxvirus</taxon>
        <taxon>Vaccinia virus</taxon>
    </lineage>
</organism>